<organism>
    <name type="scientific">Jannaschia sp. (strain CCS1)</name>
    <dbReference type="NCBI Taxonomy" id="290400"/>
    <lineage>
        <taxon>Bacteria</taxon>
        <taxon>Pseudomonadati</taxon>
        <taxon>Pseudomonadota</taxon>
        <taxon>Alphaproteobacteria</taxon>
        <taxon>Rhodobacterales</taxon>
        <taxon>Roseobacteraceae</taxon>
        <taxon>Jannaschia</taxon>
    </lineage>
</organism>
<comment type="function">
    <text evidence="1">Catalyzes the condensation of (S)-aspartate-beta-semialdehyde [(S)-ASA] and pyruvate to 4-hydroxy-tetrahydrodipicolinate (HTPA).</text>
</comment>
<comment type="catalytic activity">
    <reaction evidence="1">
        <text>L-aspartate 4-semialdehyde + pyruvate = (2S,4S)-4-hydroxy-2,3,4,5-tetrahydrodipicolinate + H2O + H(+)</text>
        <dbReference type="Rhea" id="RHEA:34171"/>
        <dbReference type="ChEBI" id="CHEBI:15361"/>
        <dbReference type="ChEBI" id="CHEBI:15377"/>
        <dbReference type="ChEBI" id="CHEBI:15378"/>
        <dbReference type="ChEBI" id="CHEBI:67139"/>
        <dbReference type="ChEBI" id="CHEBI:537519"/>
        <dbReference type="EC" id="4.3.3.7"/>
    </reaction>
</comment>
<comment type="pathway">
    <text evidence="1">Amino-acid biosynthesis; L-lysine biosynthesis via DAP pathway; (S)-tetrahydrodipicolinate from L-aspartate: step 3/4.</text>
</comment>
<comment type="subunit">
    <text evidence="1">Homotetramer; dimer of dimers.</text>
</comment>
<comment type="subcellular location">
    <subcellularLocation>
        <location evidence="1">Cytoplasm</location>
    </subcellularLocation>
</comment>
<comment type="similarity">
    <text evidence="1">Belongs to the DapA family.</text>
</comment>
<comment type="caution">
    <text evidence="2">Was originally thought to be a dihydrodipicolinate synthase (DHDPS), catalyzing the condensation of (S)-aspartate-beta-semialdehyde [(S)-ASA] and pyruvate to dihydrodipicolinate (DHDP). However, it was shown in E.coli that the product of the enzymatic reaction is not dihydrodipicolinate but in fact (4S)-4-hydroxy-2,3,4,5-tetrahydro-(2S)-dipicolinic acid (HTPA), and that the consecutive dehydration reaction leading to DHDP is not spontaneous but catalyzed by DapB.</text>
</comment>
<comment type="sequence caution" evidence="2">
    <conflict type="erroneous initiation">
        <sequence resource="EMBL-CDS" id="ABD52950"/>
    </conflict>
</comment>
<keyword id="KW-0028">Amino-acid biosynthesis</keyword>
<keyword id="KW-0963">Cytoplasm</keyword>
<keyword id="KW-0220">Diaminopimelate biosynthesis</keyword>
<keyword id="KW-0456">Lyase</keyword>
<keyword id="KW-0457">Lysine biosynthesis</keyword>
<keyword id="KW-1185">Reference proteome</keyword>
<keyword id="KW-0704">Schiff base</keyword>
<name>DAPA_JANSC</name>
<reference key="1">
    <citation type="submission" date="2006-02" db="EMBL/GenBank/DDBJ databases">
        <title>Complete sequence of chromosome of Jannaschia sp. CCS1.</title>
        <authorList>
            <consortium name="US DOE Joint Genome Institute"/>
            <person name="Copeland A."/>
            <person name="Lucas S."/>
            <person name="Lapidus A."/>
            <person name="Barry K."/>
            <person name="Detter J.C."/>
            <person name="Glavina del Rio T."/>
            <person name="Hammon N."/>
            <person name="Israni S."/>
            <person name="Pitluck S."/>
            <person name="Brettin T."/>
            <person name="Bruce D."/>
            <person name="Han C."/>
            <person name="Tapia R."/>
            <person name="Gilna P."/>
            <person name="Chertkov O."/>
            <person name="Saunders E."/>
            <person name="Schmutz J."/>
            <person name="Larimer F."/>
            <person name="Land M."/>
            <person name="Kyrpides N."/>
            <person name="Lykidis A."/>
            <person name="Moran M.A."/>
            <person name="Belas R."/>
            <person name="Ye W."/>
            <person name="Buchan A."/>
            <person name="Gonzalez J.M."/>
            <person name="Schell M.A."/>
            <person name="Richardson P."/>
        </authorList>
    </citation>
    <scope>NUCLEOTIDE SEQUENCE [LARGE SCALE GENOMIC DNA]</scope>
    <source>
        <strain>CCS1</strain>
    </source>
</reference>
<feature type="chain" id="PRO_0000340958" description="4-hydroxy-tetrahydrodipicolinate synthase">
    <location>
        <begin position="1"/>
        <end position="290"/>
    </location>
</feature>
<feature type="active site" description="Proton donor/acceptor" evidence="1">
    <location>
        <position position="131"/>
    </location>
</feature>
<feature type="active site" description="Schiff-base intermediate with substrate" evidence="1">
    <location>
        <position position="159"/>
    </location>
</feature>
<feature type="binding site" evidence="1">
    <location>
        <position position="44"/>
    </location>
    <ligand>
        <name>pyruvate</name>
        <dbReference type="ChEBI" id="CHEBI:15361"/>
    </ligand>
</feature>
<feature type="binding site" evidence="1">
    <location>
        <position position="201"/>
    </location>
    <ligand>
        <name>pyruvate</name>
        <dbReference type="ChEBI" id="CHEBI:15361"/>
    </ligand>
</feature>
<feature type="site" description="Part of a proton relay during catalysis" evidence="1">
    <location>
        <position position="43"/>
    </location>
</feature>
<feature type="site" description="Part of a proton relay during catalysis" evidence="1">
    <location>
        <position position="106"/>
    </location>
</feature>
<accession>Q28WG2</accession>
<sequence length="290" mass="30629">MFQGSMPALVTPMTNGAVDFEVLKRLVDWHVEEGSNGLVPVGTTGESPTLTHEEHEQVIETVVKAAGGRVPVIAGAGSNNTAEAMRHVQHAKDVGADATLVVTPYYNKPTQRGLIAHYEALAEVGIPIFIYNIPGRSVVDMTPETMGELAKHPMIIGVKDATADMARVSRQRETCGTDFVQMSAEDASALGFNAHGGVGCISVTANVAPKLCAEFQAAMGAGDYTEALAYQDRLMPLHNAIFTEPGLCGVKYAMSVLGLCSDEVRLPLVGVDESTKAAIEAALRHAGLLS</sequence>
<dbReference type="EC" id="4.3.3.7" evidence="1"/>
<dbReference type="EMBL" id="CP000264">
    <property type="protein sequence ID" value="ABD52950.1"/>
    <property type="status" value="ALT_INIT"/>
    <property type="molecule type" value="Genomic_DNA"/>
</dbReference>
<dbReference type="RefSeq" id="WP_044007162.1">
    <property type="nucleotide sequence ID" value="NC_007802.1"/>
</dbReference>
<dbReference type="SMR" id="Q28WG2"/>
<dbReference type="STRING" id="290400.Jann_0033"/>
<dbReference type="KEGG" id="jan:Jann_0033"/>
<dbReference type="eggNOG" id="COG0329">
    <property type="taxonomic scope" value="Bacteria"/>
</dbReference>
<dbReference type="HOGENOM" id="CLU_049343_7_1_5"/>
<dbReference type="OrthoDB" id="9782828at2"/>
<dbReference type="UniPathway" id="UPA00034">
    <property type="reaction ID" value="UER00017"/>
</dbReference>
<dbReference type="Proteomes" id="UP000008326">
    <property type="component" value="Chromosome"/>
</dbReference>
<dbReference type="GO" id="GO:0005829">
    <property type="term" value="C:cytosol"/>
    <property type="evidence" value="ECO:0007669"/>
    <property type="project" value="TreeGrafter"/>
</dbReference>
<dbReference type="GO" id="GO:0008840">
    <property type="term" value="F:4-hydroxy-tetrahydrodipicolinate synthase activity"/>
    <property type="evidence" value="ECO:0007669"/>
    <property type="project" value="UniProtKB-UniRule"/>
</dbReference>
<dbReference type="GO" id="GO:0019877">
    <property type="term" value="P:diaminopimelate biosynthetic process"/>
    <property type="evidence" value="ECO:0007669"/>
    <property type="project" value="UniProtKB-UniRule"/>
</dbReference>
<dbReference type="GO" id="GO:0009089">
    <property type="term" value="P:lysine biosynthetic process via diaminopimelate"/>
    <property type="evidence" value="ECO:0007669"/>
    <property type="project" value="UniProtKB-UniRule"/>
</dbReference>
<dbReference type="CDD" id="cd00950">
    <property type="entry name" value="DHDPS"/>
    <property type="match status" value="1"/>
</dbReference>
<dbReference type="Gene3D" id="3.20.20.70">
    <property type="entry name" value="Aldolase class I"/>
    <property type="match status" value="1"/>
</dbReference>
<dbReference type="HAMAP" id="MF_00418">
    <property type="entry name" value="DapA"/>
    <property type="match status" value="1"/>
</dbReference>
<dbReference type="InterPro" id="IPR013785">
    <property type="entry name" value="Aldolase_TIM"/>
</dbReference>
<dbReference type="InterPro" id="IPR005263">
    <property type="entry name" value="DapA"/>
</dbReference>
<dbReference type="InterPro" id="IPR002220">
    <property type="entry name" value="DapA-like"/>
</dbReference>
<dbReference type="InterPro" id="IPR020625">
    <property type="entry name" value="Schiff_base-form_aldolases_AS"/>
</dbReference>
<dbReference type="InterPro" id="IPR020624">
    <property type="entry name" value="Schiff_base-form_aldolases_CS"/>
</dbReference>
<dbReference type="NCBIfam" id="TIGR00674">
    <property type="entry name" value="dapA"/>
    <property type="match status" value="1"/>
</dbReference>
<dbReference type="PANTHER" id="PTHR12128:SF66">
    <property type="entry name" value="4-HYDROXY-2-OXOGLUTARATE ALDOLASE, MITOCHONDRIAL"/>
    <property type="match status" value="1"/>
</dbReference>
<dbReference type="PANTHER" id="PTHR12128">
    <property type="entry name" value="DIHYDRODIPICOLINATE SYNTHASE"/>
    <property type="match status" value="1"/>
</dbReference>
<dbReference type="Pfam" id="PF00701">
    <property type="entry name" value="DHDPS"/>
    <property type="match status" value="1"/>
</dbReference>
<dbReference type="PIRSF" id="PIRSF001365">
    <property type="entry name" value="DHDPS"/>
    <property type="match status" value="1"/>
</dbReference>
<dbReference type="PRINTS" id="PR00146">
    <property type="entry name" value="DHPICSNTHASE"/>
</dbReference>
<dbReference type="SMART" id="SM01130">
    <property type="entry name" value="DHDPS"/>
    <property type="match status" value="1"/>
</dbReference>
<dbReference type="SUPFAM" id="SSF51569">
    <property type="entry name" value="Aldolase"/>
    <property type="match status" value="1"/>
</dbReference>
<dbReference type="PROSITE" id="PS00665">
    <property type="entry name" value="DHDPS_1"/>
    <property type="match status" value="1"/>
</dbReference>
<dbReference type="PROSITE" id="PS00666">
    <property type="entry name" value="DHDPS_2"/>
    <property type="match status" value="1"/>
</dbReference>
<evidence type="ECO:0000255" key="1">
    <source>
        <dbReference type="HAMAP-Rule" id="MF_00418"/>
    </source>
</evidence>
<evidence type="ECO:0000305" key="2"/>
<gene>
    <name evidence="1" type="primary">dapA</name>
    <name type="ordered locus">Jann_0033</name>
</gene>
<proteinExistence type="inferred from homology"/>
<protein>
    <recommendedName>
        <fullName evidence="1">4-hydroxy-tetrahydrodipicolinate synthase</fullName>
        <shortName evidence="1">HTPA synthase</shortName>
        <ecNumber evidence="1">4.3.3.7</ecNumber>
    </recommendedName>
</protein>